<comment type="catalytic activity">
    <reaction evidence="1">
        <text>1-(5-phospho-beta-D-ribosyl)-ATP + H2O = 1-(5-phospho-beta-D-ribosyl)-5'-AMP + diphosphate + H(+)</text>
        <dbReference type="Rhea" id="RHEA:22828"/>
        <dbReference type="ChEBI" id="CHEBI:15377"/>
        <dbReference type="ChEBI" id="CHEBI:15378"/>
        <dbReference type="ChEBI" id="CHEBI:33019"/>
        <dbReference type="ChEBI" id="CHEBI:59457"/>
        <dbReference type="ChEBI" id="CHEBI:73183"/>
        <dbReference type="EC" id="3.6.1.31"/>
    </reaction>
</comment>
<comment type="pathway">
    <text evidence="1">Amino-acid biosynthesis; L-histidine biosynthesis; L-histidine from 5-phospho-alpha-D-ribose 1-diphosphate: step 2/9.</text>
</comment>
<comment type="subcellular location">
    <subcellularLocation>
        <location evidence="1">Cytoplasm</location>
    </subcellularLocation>
</comment>
<comment type="similarity">
    <text evidence="1">Belongs to the PRA-PH family.</text>
</comment>
<protein>
    <recommendedName>
        <fullName evidence="1">Phosphoribosyl-ATP pyrophosphatase</fullName>
        <shortName evidence="1">PRA-PH</shortName>
        <ecNumber evidence="1">3.6.1.31</ecNumber>
    </recommendedName>
</protein>
<feature type="chain" id="PRO_1000190394" description="Phosphoribosyl-ATP pyrophosphatase">
    <location>
        <begin position="1"/>
        <end position="94"/>
    </location>
</feature>
<name>HIS2_PYRNV</name>
<sequence>MSCEVLRKLEEVIRRRIEEKNPESYTYRLYSSGMHNVARKVGEEAVEVAVAALAEGKGRVVEEAADLLYHLLVLLNSTGLSLADVCAELEKRMR</sequence>
<accession>B1YAN0</accession>
<keyword id="KW-0028">Amino-acid biosynthesis</keyword>
<keyword id="KW-0067">ATP-binding</keyword>
<keyword id="KW-0963">Cytoplasm</keyword>
<keyword id="KW-0368">Histidine biosynthesis</keyword>
<keyword id="KW-0378">Hydrolase</keyword>
<keyword id="KW-0547">Nucleotide-binding</keyword>
<evidence type="ECO:0000255" key="1">
    <source>
        <dbReference type="HAMAP-Rule" id="MF_01020"/>
    </source>
</evidence>
<dbReference type="EC" id="3.6.1.31" evidence="1"/>
<dbReference type="EMBL" id="CP001014">
    <property type="protein sequence ID" value="ACB39109.1"/>
    <property type="molecule type" value="Genomic_DNA"/>
</dbReference>
<dbReference type="RefSeq" id="WP_012349530.1">
    <property type="nucleotide sequence ID" value="NC_010525.1"/>
</dbReference>
<dbReference type="SMR" id="B1YAN0"/>
<dbReference type="STRING" id="444157.Tneu_0152"/>
<dbReference type="GeneID" id="6165018"/>
<dbReference type="KEGG" id="tne:Tneu_0152"/>
<dbReference type="eggNOG" id="arCOG02677">
    <property type="taxonomic scope" value="Archaea"/>
</dbReference>
<dbReference type="HOGENOM" id="CLU_123337_0_0_2"/>
<dbReference type="OrthoDB" id="39686at2157"/>
<dbReference type="UniPathway" id="UPA00031">
    <property type="reaction ID" value="UER00007"/>
</dbReference>
<dbReference type="Proteomes" id="UP000001694">
    <property type="component" value="Chromosome"/>
</dbReference>
<dbReference type="GO" id="GO:0005737">
    <property type="term" value="C:cytoplasm"/>
    <property type="evidence" value="ECO:0007669"/>
    <property type="project" value="UniProtKB-SubCell"/>
</dbReference>
<dbReference type="GO" id="GO:0005524">
    <property type="term" value="F:ATP binding"/>
    <property type="evidence" value="ECO:0007669"/>
    <property type="project" value="UniProtKB-KW"/>
</dbReference>
<dbReference type="GO" id="GO:0004636">
    <property type="term" value="F:phosphoribosyl-ATP diphosphatase activity"/>
    <property type="evidence" value="ECO:0007669"/>
    <property type="project" value="UniProtKB-UniRule"/>
</dbReference>
<dbReference type="GO" id="GO:0000105">
    <property type="term" value="P:L-histidine biosynthetic process"/>
    <property type="evidence" value="ECO:0007669"/>
    <property type="project" value="UniProtKB-UniRule"/>
</dbReference>
<dbReference type="CDD" id="cd11534">
    <property type="entry name" value="NTP-PPase_HisIE_like"/>
    <property type="match status" value="1"/>
</dbReference>
<dbReference type="FunFam" id="1.10.287.1080:FF:000002">
    <property type="entry name" value="Histidine biosynthesis bifunctional protein HisIE"/>
    <property type="match status" value="1"/>
</dbReference>
<dbReference type="Gene3D" id="1.10.287.1080">
    <property type="entry name" value="MazG-like"/>
    <property type="match status" value="1"/>
</dbReference>
<dbReference type="HAMAP" id="MF_01020">
    <property type="entry name" value="HisE"/>
    <property type="match status" value="1"/>
</dbReference>
<dbReference type="InterPro" id="IPR008179">
    <property type="entry name" value="HisE"/>
</dbReference>
<dbReference type="InterPro" id="IPR021130">
    <property type="entry name" value="PRib-ATP_PPHydrolase-like"/>
</dbReference>
<dbReference type="NCBIfam" id="TIGR03188">
    <property type="entry name" value="histidine_hisI"/>
    <property type="match status" value="1"/>
</dbReference>
<dbReference type="PANTHER" id="PTHR42945">
    <property type="entry name" value="HISTIDINE BIOSYNTHESIS BIFUNCTIONAL PROTEIN"/>
    <property type="match status" value="1"/>
</dbReference>
<dbReference type="PANTHER" id="PTHR42945:SF1">
    <property type="entry name" value="HISTIDINE BIOSYNTHESIS BIFUNCTIONAL PROTEIN HIS7"/>
    <property type="match status" value="1"/>
</dbReference>
<dbReference type="Pfam" id="PF01503">
    <property type="entry name" value="PRA-PH"/>
    <property type="match status" value="1"/>
</dbReference>
<dbReference type="SUPFAM" id="SSF101386">
    <property type="entry name" value="all-alpha NTP pyrophosphatases"/>
    <property type="match status" value="1"/>
</dbReference>
<organism>
    <name type="scientific">Pyrobaculum neutrophilum (strain DSM 2338 / JCM 9278 / NBRC 100436 / V24Sta)</name>
    <name type="common">Thermoproteus neutrophilus</name>
    <dbReference type="NCBI Taxonomy" id="444157"/>
    <lineage>
        <taxon>Archaea</taxon>
        <taxon>Thermoproteota</taxon>
        <taxon>Thermoprotei</taxon>
        <taxon>Thermoproteales</taxon>
        <taxon>Thermoproteaceae</taxon>
        <taxon>Pyrobaculum</taxon>
    </lineage>
</organism>
<reference key="1">
    <citation type="submission" date="2008-03" db="EMBL/GenBank/DDBJ databases">
        <title>Complete sequence of Thermoproteus neutrophilus V24Sta.</title>
        <authorList>
            <consortium name="US DOE Joint Genome Institute"/>
            <person name="Copeland A."/>
            <person name="Lucas S."/>
            <person name="Lapidus A."/>
            <person name="Glavina del Rio T."/>
            <person name="Dalin E."/>
            <person name="Tice H."/>
            <person name="Bruce D."/>
            <person name="Goodwin L."/>
            <person name="Pitluck S."/>
            <person name="Sims D."/>
            <person name="Brettin T."/>
            <person name="Detter J.C."/>
            <person name="Han C."/>
            <person name="Kuske C.R."/>
            <person name="Schmutz J."/>
            <person name="Larimer F."/>
            <person name="Land M."/>
            <person name="Hauser L."/>
            <person name="Kyrpides N."/>
            <person name="Mikhailova N."/>
            <person name="Biddle J.F."/>
            <person name="Zhang Z."/>
            <person name="Fitz-Gibbon S.T."/>
            <person name="Lowe T.M."/>
            <person name="Saltikov C."/>
            <person name="House C.H."/>
            <person name="Richardson P."/>
        </authorList>
    </citation>
    <scope>NUCLEOTIDE SEQUENCE [LARGE SCALE GENOMIC DNA]</scope>
    <source>
        <strain>DSM 2338 / JCM 9278 / NBRC 100436 / V24Sta</strain>
    </source>
</reference>
<proteinExistence type="inferred from homology"/>
<gene>
    <name evidence="1" type="primary">hisE</name>
    <name type="ordered locus">Tneu_0152</name>
</gene>